<gene>
    <name type="primary">CYCD5-1</name>
    <name type="ordered locus">Os03g0617500</name>
    <name type="ordered locus">LOC_Os03g42070</name>
    <name type="ORF">OSJNBa0063J18.4</name>
</gene>
<keyword id="KW-0131">Cell cycle</keyword>
<keyword id="KW-0132">Cell division</keyword>
<keyword id="KW-0195">Cyclin</keyword>
<keyword id="KW-1185">Reference proteome</keyword>
<proteinExistence type="evidence at transcript level"/>
<dbReference type="EMBL" id="AC107206">
    <property type="protein sequence ID" value="AAT77041.1"/>
    <property type="molecule type" value="Genomic_DNA"/>
</dbReference>
<dbReference type="EMBL" id="DP000009">
    <property type="protein sequence ID" value="ABF97642.1"/>
    <property type="molecule type" value="Genomic_DNA"/>
</dbReference>
<dbReference type="EMBL" id="AP008209">
    <property type="protein sequence ID" value="BAF12579.1"/>
    <property type="status" value="ALT_SEQ"/>
    <property type="molecule type" value="Genomic_DNA"/>
</dbReference>
<dbReference type="EMBL" id="AP014959">
    <property type="status" value="NOT_ANNOTATED_CDS"/>
    <property type="molecule type" value="Genomic_DNA"/>
</dbReference>
<dbReference type="EMBL" id="AK068729">
    <property type="status" value="NOT_ANNOTATED_CDS"/>
    <property type="molecule type" value="mRNA"/>
</dbReference>
<dbReference type="RefSeq" id="XP_015628749.1">
    <property type="nucleotide sequence ID" value="XM_015773263.1"/>
</dbReference>
<dbReference type="SMR" id="Q0DQA9"/>
<dbReference type="FunCoup" id="Q0DQA9">
    <property type="interactions" value="272"/>
</dbReference>
<dbReference type="STRING" id="39947.Q0DQA9"/>
<dbReference type="PaxDb" id="39947-Q0DQA9"/>
<dbReference type="KEGG" id="dosa:Os03g0617500"/>
<dbReference type="eggNOG" id="KOG0656">
    <property type="taxonomic scope" value="Eukaryota"/>
</dbReference>
<dbReference type="HOGENOM" id="CLU_048040_4_0_1"/>
<dbReference type="InParanoid" id="Q0DQA9"/>
<dbReference type="OrthoDB" id="306099at2759"/>
<dbReference type="Proteomes" id="UP000000763">
    <property type="component" value="Chromosome 3"/>
</dbReference>
<dbReference type="Proteomes" id="UP000059680">
    <property type="component" value="Chromosome 3"/>
</dbReference>
<dbReference type="GO" id="GO:0000307">
    <property type="term" value="C:cyclin-dependent protein kinase holoenzyme complex"/>
    <property type="evidence" value="ECO:0000318"/>
    <property type="project" value="GO_Central"/>
</dbReference>
<dbReference type="GO" id="GO:0005737">
    <property type="term" value="C:cytoplasm"/>
    <property type="evidence" value="ECO:0000318"/>
    <property type="project" value="GO_Central"/>
</dbReference>
<dbReference type="GO" id="GO:0005634">
    <property type="term" value="C:nucleus"/>
    <property type="evidence" value="ECO:0000318"/>
    <property type="project" value="GO_Central"/>
</dbReference>
<dbReference type="GO" id="GO:0016538">
    <property type="term" value="F:cyclin-dependent protein serine/threonine kinase regulator activity"/>
    <property type="evidence" value="ECO:0000318"/>
    <property type="project" value="GO_Central"/>
</dbReference>
<dbReference type="GO" id="GO:0051301">
    <property type="term" value="P:cell division"/>
    <property type="evidence" value="ECO:0007669"/>
    <property type="project" value="UniProtKB-KW"/>
</dbReference>
<dbReference type="GO" id="GO:0000082">
    <property type="term" value="P:G1/S transition of mitotic cell cycle"/>
    <property type="evidence" value="ECO:0000318"/>
    <property type="project" value="GO_Central"/>
</dbReference>
<dbReference type="FunFam" id="1.10.472.10:FF:000114">
    <property type="entry name" value="Cyclin-D5-1"/>
    <property type="match status" value="1"/>
</dbReference>
<dbReference type="Gene3D" id="1.10.472.10">
    <property type="entry name" value="Cyclin-like"/>
    <property type="match status" value="2"/>
</dbReference>
<dbReference type="InterPro" id="IPR039361">
    <property type="entry name" value="Cyclin"/>
</dbReference>
<dbReference type="InterPro" id="IPR013763">
    <property type="entry name" value="Cyclin-like_dom"/>
</dbReference>
<dbReference type="InterPro" id="IPR036915">
    <property type="entry name" value="Cyclin-like_sf"/>
</dbReference>
<dbReference type="InterPro" id="IPR006671">
    <property type="entry name" value="Cyclin_N"/>
</dbReference>
<dbReference type="PANTHER" id="PTHR10177">
    <property type="entry name" value="CYCLINS"/>
    <property type="match status" value="1"/>
</dbReference>
<dbReference type="Pfam" id="PF00134">
    <property type="entry name" value="Cyclin_N"/>
    <property type="match status" value="1"/>
</dbReference>
<dbReference type="SMART" id="SM00385">
    <property type="entry name" value="CYCLIN"/>
    <property type="match status" value="1"/>
</dbReference>
<dbReference type="SUPFAM" id="SSF47954">
    <property type="entry name" value="Cyclin-like"/>
    <property type="match status" value="1"/>
</dbReference>
<reference key="1">
    <citation type="journal article" date="2005" name="Genome Res.">
        <title>Sequence, annotation, and analysis of synteny between rice chromosome 3 and diverged grass species.</title>
        <authorList>
            <consortium name="The rice chromosome 3 sequencing consortium"/>
            <person name="Buell C.R."/>
            <person name="Yuan Q."/>
            <person name="Ouyang S."/>
            <person name="Liu J."/>
            <person name="Zhu W."/>
            <person name="Wang A."/>
            <person name="Maiti R."/>
            <person name="Haas B."/>
            <person name="Wortman J."/>
            <person name="Pertea M."/>
            <person name="Jones K.M."/>
            <person name="Kim M."/>
            <person name="Overton L."/>
            <person name="Tsitrin T."/>
            <person name="Fadrosh D."/>
            <person name="Bera J."/>
            <person name="Weaver B."/>
            <person name="Jin S."/>
            <person name="Johri S."/>
            <person name="Reardon M."/>
            <person name="Webb K."/>
            <person name="Hill J."/>
            <person name="Moffat K."/>
            <person name="Tallon L."/>
            <person name="Van Aken S."/>
            <person name="Lewis M."/>
            <person name="Utterback T."/>
            <person name="Feldblyum T."/>
            <person name="Zismann V."/>
            <person name="Iobst S."/>
            <person name="Hsiao J."/>
            <person name="de Vazeille A.R."/>
            <person name="Salzberg S.L."/>
            <person name="White O."/>
            <person name="Fraser C.M."/>
            <person name="Yu Y."/>
            <person name="Kim H."/>
            <person name="Rambo T."/>
            <person name="Currie J."/>
            <person name="Collura K."/>
            <person name="Kernodle-Thompson S."/>
            <person name="Wei F."/>
            <person name="Kudrna K."/>
            <person name="Ammiraju J.S.S."/>
            <person name="Luo M."/>
            <person name="Goicoechea J.L."/>
            <person name="Wing R.A."/>
            <person name="Henry D."/>
            <person name="Oates R."/>
            <person name="Palmer M."/>
            <person name="Pries G."/>
            <person name="Saski C."/>
            <person name="Simmons J."/>
            <person name="Soderlund C."/>
            <person name="Nelson W."/>
            <person name="de la Bastide M."/>
            <person name="Spiegel L."/>
            <person name="Nascimento L."/>
            <person name="Huang E."/>
            <person name="Preston R."/>
            <person name="Zutavern T."/>
            <person name="Palmer L."/>
            <person name="O'Shaughnessy A."/>
            <person name="Dike S."/>
            <person name="McCombie W.R."/>
            <person name="Minx P."/>
            <person name="Cordum H."/>
            <person name="Wilson R."/>
            <person name="Jin W."/>
            <person name="Lee H.R."/>
            <person name="Jiang J."/>
            <person name="Jackson S."/>
        </authorList>
    </citation>
    <scope>NUCLEOTIDE SEQUENCE [LARGE SCALE GENOMIC DNA]</scope>
    <source>
        <strain>cv. Nipponbare</strain>
    </source>
</reference>
<reference key="2">
    <citation type="journal article" date="2005" name="Nature">
        <title>The map-based sequence of the rice genome.</title>
        <authorList>
            <consortium name="International rice genome sequencing project (IRGSP)"/>
        </authorList>
    </citation>
    <scope>NUCLEOTIDE SEQUENCE [LARGE SCALE GENOMIC DNA]</scope>
    <source>
        <strain>cv. Nipponbare</strain>
    </source>
</reference>
<reference key="3">
    <citation type="journal article" date="2008" name="Nucleic Acids Res.">
        <title>The rice annotation project database (RAP-DB): 2008 update.</title>
        <authorList>
            <consortium name="The rice annotation project (RAP)"/>
        </authorList>
    </citation>
    <scope>GENOME REANNOTATION</scope>
    <source>
        <strain>cv. Nipponbare</strain>
    </source>
</reference>
<reference key="4">
    <citation type="journal article" date="2013" name="Rice">
        <title>Improvement of the Oryza sativa Nipponbare reference genome using next generation sequence and optical map data.</title>
        <authorList>
            <person name="Kawahara Y."/>
            <person name="de la Bastide M."/>
            <person name="Hamilton J.P."/>
            <person name="Kanamori H."/>
            <person name="McCombie W.R."/>
            <person name="Ouyang S."/>
            <person name="Schwartz D.C."/>
            <person name="Tanaka T."/>
            <person name="Wu J."/>
            <person name="Zhou S."/>
            <person name="Childs K.L."/>
            <person name="Davidson R.M."/>
            <person name="Lin H."/>
            <person name="Quesada-Ocampo L."/>
            <person name="Vaillancourt B."/>
            <person name="Sakai H."/>
            <person name="Lee S.S."/>
            <person name="Kim J."/>
            <person name="Numa H."/>
            <person name="Itoh T."/>
            <person name="Buell C.R."/>
            <person name="Matsumoto T."/>
        </authorList>
    </citation>
    <scope>GENOME REANNOTATION</scope>
    <source>
        <strain>cv. Nipponbare</strain>
    </source>
</reference>
<reference key="5">
    <citation type="journal article" date="2003" name="Science">
        <title>Collection, mapping, and annotation of over 28,000 cDNA clones from japonica rice.</title>
        <authorList>
            <consortium name="The rice full-length cDNA consortium"/>
        </authorList>
    </citation>
    <scope>NUCLEOTIDE SEQUENCE [LARGE SCALE MRNA]</scope>
    <source>
        <strain>cv. Nipponbare</strain>
    </source>
</reference>
<reference key="6">
    <citation type="journal article" date="2006" name="Mol. Genet. Genomics">
        <title>Genome-wide analysis of cyclin family in rice (Oryza sativa L.).</title>
        <authorList>
            <person name="La H."/>
            <person name="Li J."/>
            <person name="Ji Z."/>
            <person name="Cheng Y."/>
            <person name="Li X."/>
            <person name="Jiang S."/>
            <person name="Venkatesh P.N."/>
            <person name="Ramachandran S."/>
        </authorList>
    </citation>
    <scope>GENE FAMILY</scope>
    <scope>NOMENCLATURE</scope>
</reference>
<protein>
    <recommendedName>
        <fullName>Cyclin-D5-1</fullName>
    </recommendedName>
    <alternativeName>
        <fullName>G1/S-specific cyclin-D5-1</fullName>
        <shortName>CycD5;1</shortName>
    </alternativeName>
</protein>
<comment type="similarity">
    <text evidence="2">Belongs to the cyclin family. Cyclin D subfamily.</text>
</comment>
<comment type="sequence caution" evidence="2">
    <conflict type="erroneous termination">
        <sequence resource="EMBL" id="AK068729"/>
    </conflict>
    <text>Truncated C-terminus.</text>
</comment>
<comment type="sequence caution" evidence="2">
    <conflict type="erroneous gene model prediction">
        <sequence resource="EMBL-CDS" id="BAF12579"/>
    </conflict>
</comment>
<feature type="chain" id="PRO_0000287034" description="Cyclin-D5-1">
    <location>
        <begin position="1"/>
        <end position="367"/>
    </location>
</feature>
<feature type="region of interest" description="Disordered" evidence="1">
    <location>
        <begin position="307"/>
        <end position="333"/>
    </location>
</feature>
<name>CCD51_ORYSJ</name>
<evidence type="ECO:0000256" key="1">
    <source>
        <dbReference type="SAM" id="MobiDB-lite"/>
    </source>
</evidence>
<evidence type="ECO:0000305" key="2"/>
<sequence length="367" mass="38727">MEAEDEYSAGCSFSLMCQEDSTDLDDDGGGGGCFAGDGRADLLLVYNAAAAADDEDEEEVEEYMDHLVSKESSFCSSSSSTSSSSCCFSDAGGESAAAAAPMDWFALARRATVKWILETRGCFGFCHRTAYLAIAYFDRFCLRRCIDRSVMPWAARLLAVACVSLAAKMEEYRAPALSEFRAGVGDDGYEFSCVCIRRMELLVLSTLDWRMAAVTPFDYLPCLSSRLRRHVGGGGGAGASAALIFSAAEAASVLDHRPSTVAAAAVLAATHGALTREALESKMSGLSPSFLLDKEDVFACYSAMLSQPTSPASKSTTTTTGKRSSSSSCSESTDAASSYDATAASFPAAASCGSKRMRLELPGGILR</sequence>
<organism>
    <name type="scientific">Oryza sativa subsp. japonica</name>
    <name type="common">Rice</name>
    <dbReference type="NCBI Taxonomy" id="39947"/>
    <lineage>
        <taxon>Eukaryota</taxon>
        <taxon>Viridiplantae</taxon>
        <taxon>Streptophyta</taxon>
        <taxon>Embryophyta</taxon>
        <taxon>Tracheophyta</taxon>
        <taxon>Spermatophyta</taxon>
        <taxon>Magnoliopsida</taxon>
        <taxon>Liliopsida</taxon>
        <taxon>Poales</taxon>
        <taxon>Poaceae</taxon>
        <taxon>BOP clade</taxon>
        <taxon>Oryzoideae</taxon>
        <taxon>Oryzeae</taxon>
        <taxon>Oryzinae</taxon>
        <taxon>Oryza</taxon>
        <taxon>Oryza sativa</taxon>
    </lineage>
</organism>
<accession>Q0DQA9</accession>
<accession>Q6AV38</accession>